<reference key="1">
    <citation type="journal article" date="2009" name="Stand. Genomic Sci.">
        <title>Complete genome sequence of Methanocorpusculum labreanum type strain Z.</title>
        <authorList>
            <person name="Anderson I.J."/>
            <person name="Sieprawska-Lupa M."/>
            <person name="Goltsman E."/>
            <person name="Lapidus A."/>
            <person name="Copeland A."/>
            <person name="Glavina Del Rio T."/>
            <person name="Tice H."/>
            <person name="Dalin E."/>
            <person name="Barry K."/>
            <person name="Pitluck S."/>
            <person name="Hauser L."/>
            <person name="Land M."/>
            <person name="Lucas S."/>
            <person name="Richardson P."/>
            <person name="Whitman W.B."/>
            <person name="Kyrpides N.C."/>
        </authorList>
    </citation>
    <scope>NUCLEOTIDE SEQUENCE [LARGE SCALE GENOMIC DNA]</scope>
    <source>
        <strain>ATCC 43576 / DSM 4855 / Z</strain>
    </source>
</reference>
<proteinExistence type="inferred from homology"/>
<gene>
    <name evidence="1" type="primary">rpl15e</name>
    <name type="ordered locus">Mlab_1344</name>
</gene>
<protein>
    <recommendedName>
        <fullName evidence="1">Large ribosomal subunit protein eL15</fullName>
    </recommendedName>
    <alternativeName>
        <fullName evidence="3">50S ribosomal protein L15e</fullName>
    </alternativeName>
</protein>
<name>RL15E_METLZ</name>
<accession>A2ST55</accession>
<sequence length="194" mass="22323">MSKSMYGYVRDAWKKPAESGVKKLLWERMQTWRRQGAVVRLERPTRIDRARELGYKAKQGIIVVRASIRRGGRRKSRYIRGRRTNRMGMRKATPGKNLQSIAEERAATRYPNMEVLNSYWVGQDGKSKYYEVILVDRNSPSVLADKNLAWVADTRGRVFRGKTSAGRRARGLHNRGTGTEKCRPSLTSHKNQGK</sequence>
<keyword id="KW-1185">Reference proteome</keyword>
<keyword id="KW-0687">Ribonucleoprotein</keyword>
<keyword id="KW-0689">Ribosomal protein</keyword>
<organism>
    <name type="scientific">Methanocorpusculum labreanum (strain ATCC 43576 / DSM 4855 / Z)</name>
    <dbReference type="NCBI Taxonomy" id="410358"/>
    <lineage>
        <taxon>Archaea</taxon>
        <taxon>Methanobacteriati</taxon>
        <taxon>Methanobacteriota</taxon>
        <taxon>Stenosarchaea group</taxon>
        <taxon>Methanomicrobia</taxon>
        <taxon>Methanomicrobiales</taxon>
        <taxon>Methanocorpusculaceae</taxon>
        <taxon>Methanocorpusculum</taxon>
    </lineage>
</organism>
<dbReference type="EMBL" id="CP000559">
    <property type="protein sequence ID" value="ABN07511.1"/>
    <property type="molecule type" value="Genomic_DNA"/>
</dbReference>
<dbReference type="RefSeq" id="WP_011833714.1">
    <property type="nucleotide sequence ID" value="NC_008942.1"/>
</dbReference>
<dbReference type="SMR" id="A2ST55"/>
<dbReference type="STRING" id="410358.Mlab_1344"/>
<dbReference type="GeneID" id="4795533"/>
<dbReference type="KEGG" id="mla:Mlab_1344"/>
<dbReference type="eggNOG" id="arCOG04209">
    <property type="taxonomic scope" value="Archaea"/>
</dbReference>
<dbReference type="HOGENOM" id="CLU_080796_1_0_2"/>
<dbReference type="OrthoDB" id="8183at2157"/>
<dbReference type="Proteomes" id="UP000000365">
    <property type="component" value="Chromosome"/>
</dbReference>
<dbReference type="GO" id="GO:0022625">
    <property type="term" value="C:cytosolic large ribosomal subunit"/>
    <property type="evidence" value="ECO:0007669"/>
    <property type="project" value="TreeGrafter"/>
</dbReference>
<dbReference type="GO" id="GO:0003723">
    <property type="term" value="F:RNA binding"/>
    <property type="evidence" value="ECO:0007669"/>
    <property type="project" value="TreeGrafter"/>
</dbReference>
<dbReference type="GO" id="GO:0003735">
    <property type="term" value="F:structural constituent of ribosome"/>
    <property type="evidence" value="ECO:0007669"/>
    <property type="project" value="InterPro"/>
</dbReference>
<dbReference type="GO" id="GO:0002181">
    <property type="term" value="P:cytoplasmic translation"/>
    <property type="evidence" value="ECO:0007669"/>
    <property type="project" value="TreeGrafter"/>
</dbReference>
<dbReference type="FunFam" id="3.40.1120.10:FF:000002">
    <property type="entry name" value="50S ribosomal protein L15e"/>
    <property type="match status" value="1"/>
</dbReference>
<dbReference type="Gene3D" id="3.40.1120.10">
    <property type="entry name" value="Ribosomal protein l15e"/>
    <property type="match status" value="1"/>
</dbReference>
<dbReference type="HAMAP" id="MF_00256">
    <property type="entry name" value="Ribosomal_eL15"/>
    <property type="match status" value="1"/>
</dbReference>
<dbReference type="InterPro" id="IPR024794">
    <property type="entry name" value="Rbsml_eL15_core_dom_sf"/>
</dbReference>
<dbReference type="InterPro" id="IPR000439">
    <property type="entry name" value="Ribosomal_eL15"/>
</dbReference>
<dbReference type="InterPro" id="IPR020926">
    <property type="entry name" value="Ribosomal_eL15_arc"/>
</dbReference>
<dbReference type="InterPro" id="IPR020925">
    <property type="entry name" value="Ribosomal_eL15_CS"/>
</dbReference>
<dbReference type="InterPro" id="IPR012678">
    <property type="entry name" value="Ribosomal_uL23/eL15/eS24_sf"/>
</dbReference>
<dbReference type="NCBIfam" id="NF003269">
    <property type="entry name" value="PRK04243.1"/>
    <property type="match status" value="1"/>
</dbReference>
<dbReference type="PANTHER" id="PTHR11847:SF4">
    <property type="entry name" value="LARGE RIBOSOMAL SUBUNIT PROTEIN EL15"/>
    <property type="match status" value="1"/>
</dbReference>
<dbReference type="PANTHER" id="PTHR11847">
    <property type="entry name" value="RIBOSOMAL PROTEIN L15"/>
    <property type="match status" value="1"/>
</dbReference>
<dbReference type="Pfam" id="PF00827">
    <property type="entry name" value="Ribosomal_L15e"/>
    <property type="match status" value="1"/>
</dbReference>
<dbReference type="SMART" id="SM01384">
    <property type="entry name" value="Ribosomal_L15e"/>
    <property type="match status" value="1"/>
</dbReference>
<dbReference type="SUPFAM" id="SSF54189">
    <property type="entry name" value="Ribosomal proteins S24e, L23 and L15e"/>
    <property type="match status" value="1"/>
</dbReference>
<dbReference type="PROSITE" id="PS01194">
    <property type="entry name" value="RIBOSOMAL_L15E"/>
    <property type="match status" value="1"/>
</dbReference>
<evidence type="ECO:0000255" key="1">
    <source>
        <dbReference type="HAMAP-Rule" id="MF_00256"/>
    </source>
</evidence>
<evidence type="ECO:0000256" key="2">
    <source>
        <dbReference type="SAM" id="MobiDB-lite"/>
    </source>
</evidence>
<evidence type="ECO:0000305" key="3"/>
<feature type="chain" id="PRO_0000304205" description="Large ribosomal subunit protein eL15">
    <location>
        <begin position="1"/>
        <end position="194"/>
    </location>
</feature>
<feature type="region of interest" description="Disordered" evidence="2">
    <location>
        <begin position="162"/>
        <end position="194"/>
    </location>
</feature>
<feature type="compositionally biased region" description="Basic residues" evidence="2">
    <location>
        <begin position="162"/>
        <end position="173"/>
    </location>
</feature>
<feature type="compositionally biased region" description="Polar residues" evidence="2">
    <location>
        <begin position="185"/>
        <end position="194"/>
    </location>
</feature>
<comment type="similarity">
    <text evidence="1">Belongs to the eukaryotic ribosomal protein eL15 family.</text>
</comment>